<comment type="function">
    <text evidence="1">Component of the ribosome, a large ribonucleoprotein complex responsible for the synthesis of proteins in the cell. The small ribosomal subunit (SSU) binds messenger RNAs (mRNAs) and translates the encoded message by selecting cognate aminoacyl-transfer RNA (tRNA) molecules. The large subunit (LSU) contains the ribosomal catalytic site termed the peptidyl transferase center (PTC), which catalyzes the formation of peptide bonds, thereby polymerizing the amino acids delivered by tRNAs into a polypeptide chain. The nascent polypeptides leave the ribosome through a tunnel in the LSU and interact with protein factors that function in enzymatic processing, targeting, and the membrane insertion of nascent chains at the exit of the ribosomal tunnel.</text>
</comment>
<comment type="subunit">
    <text evidence="1">Component of the small ribosomal subunit (SSU). Mature yeast ribosomes consist of a small (40S) and a large (60S) subunit. The 40S small subunit contains 1 molecule of ribosomal RNA (18S rRNA) and at least 33 different proteins. The large 60S subunit contains 3 rRNA molecules (25S, 5.8S and 5S rRNA) and at least 46 different proteins.</text>
</comment>
<comment type="subcellular location">
    <subcellularLocation>
        <location evidence="1">Cytoplasm</location>
    </subcellularLocation>
    <subcellularLocation>
        <location evidence="2">Nucleus</location>
    </subcellularLocation>
    <subcellularLocation>
        <location evidence="2">Nucleus</location>
        <location evidence="2">Nucleolus</location>
    </subcellularLocation>
</comment>
<comment type="PTM">
    <text evidence="5">Hydroxylation at Pro-62 affects translation termination efficiency.</text>
</comment>
<comment type="miscellaneous">
    <text>There are 2 genes for uS12 in S.pombe.</text>
</comment>
<comment type="similarity">
    <text evidence="4">Belongs to the universal ribosomal protein uS12 family.</text>
</comment>
<proteinExistence type="evidence at protein level"/>
<gene>
    <name type="primary">rps2302</name>
    <name type="synonym">rps23b</name>
    <name type="ORF">SPBP4H10.13</name>
</gene>
<protein>
    <recommendedName>
        <fullName evidence="4">Small ribosomal subunit protein uS12B</fullName>
    </recommendedName>
    <alternativeName>
        <fullName>40S ribosomal protein S23-B</fullName>
    </alternativeName>
</protein>
<sequence>MGKPAGLNAARKLRNHRREERWADAHYKKRLLGTAYKSSPFGGSSHAKGIVVEKIGVEAKQPNSAIRKCVRVQLIKNGKKVTAFVPHDGCLNFVDENDEVLLSGFGRKGKAKGDIPGVRFKVVKVAGVGLSALFHEKKEKPRA</sequence>
<name>RS23B_SCHPO</name>
<feature type="chain" id="PRO_0000433413" description="Small ribosomal subunit protein uS12B">
    <location>
        <begin position="1"/>
        <end position="143"/>
    </location>
</feature>
<feature type="modified residue" description="3,4-dihydroxyproline" evidence="3">
    <location>
        <position position="62"/>
    </location>
</feature>
<accession>P0CT76</accession>
<accession>P79057</accession>
<reference key="1">
    <citation type="journal article" date="2002" name="Nature">
        <title>The genome sequence of Schizosaccharomyces pombe.</title>
        <authorList>
            <person name="Wood V."/>
            <person name="Gwilliam R."/>
            <person name="Rajandream M.A."/>
            <person name="Lyne M.H."/>
            <person name="Lyne R."/>
            <person name="Stewart A."/>
            <person name="Sgouros J.G."/>
            <person name="Peat N."/>
            <person name="Hayles J."/>
            <person name="Baker S.G."/>
            <person name="Basham D."/>
            <person name="Bowman S."/>
            <person name="Brooks K."/>
            <person name="Brown D."/>
            <person name="Brown S."/>
            <person name="Chillingworth T."/>
            <person name="Churcher C.M."/>
            <person name="Collins M."/>
            <person name="Connor R."/>
            <person name="Cronin A."/>
            <person name="Davis P."/>
            <person name="Feltwell T."/>
            <person name="Fraser A."/>
            <person name="Gentles S."/>
            <person name="Goble A."/>
            <person name="Hamlin N."/>
            <person name="Harris D.E."/>
            <person name="Hidalgo J."/>
            <person name="Hodgson G."/>
            <person name="Holroyd S."/>
            <person name="Hornsby T."/>
            <person name="Howarth S."/>
            <person name="Huckle E.J."/>
            <person name="Hunt S."/>
            <person name="Jagels K."/>
            <person name="James K.D."/>
            <person name="Jones L."/>
            <person name="Jones M."/>
            <person name="Leather S."/>
            <person name="McDonald S."/>
            <person name="McLean J."/>
            <person name="Mooney P."/>
            <person name="Moule S."/>
            <person name="Mungall K.L."/>
            <person name="Murphy L.D."/>
            <person name="Niblett D."/>
            <person name="Odell C."/>
            <person name="Oliver K."/>
            <person name="O'Neil S."/>
            <person name="Pearson D."/>
            <person name="Quail M.A."/>
            <person name="Rabbinowitsch E."/>
            <person name="Rutherford K.M."/>
            <person name="Rutter S."/>
            <person name="Saunders D."/>
            <person name="Seeger K."/>
            <person name="Sharp S."/>
            <person name="Skelton J."/>
            <person name="Simmonds M.N."/>
            <person name="Squares R."/>
            <person name="Squares S."/>
            <person name="Stevens K."/>
            <person name="Taylor K."/>
            <person name="Taylor R.G."/>
            <person name="Tivey A."/>
            <person name="Walsh S.V."/>
            <person name="Warren T."/>
            <person name="Whitehead S."/>
            <person name="Woodward J.R."/>
            <person name="Volckaert G."/>
            <person name="Aert R."/>
            <person name="Robben J."/>
            <person name="Grymonprez B."/>
            <person name="Weltjens I."/>
            <person name="Vanstreels E."/>
            <person name="Rieger M."/>
            <person name="Schaefer M."/>
            <person name="Mueller-Auer S."/>
            <person name="Gabel C."/>
            <person name="Fuchs M."/>
            <person name="Duesterhoeft A."/>
            <person name="Fritzc C."/>
            <person name="Holzer E."/>
            <person name="Moestl D."/>
            <person name="Hilbert H."/>
            <person name="Borzym K."/>
            <person name="Langer I."/>
            <person name="Beck A."/>
            <person name="Lehrach H."/>
            <person name="Reinhardt R."/>
            <person name="Pohl T.M."/>
            <person name="Eger P."/>
            <person name="Zimmermann W."/>
            <person name="Wedler H."/>
            <person name="Wambutt R."/>
            <person name="Purnelle B."/>
            <person name="Goffeau A."/>
            <person name="Cadieu E."/>
            <person name="Dreano S."/>
            <person name="Gloux S."/>
            <person name="Lelaure V."/>
            <person name="Mottier S."/>
            <person name="Galibert F."/>
            <person name="Aves S.J."/>
            <person name="Xiang Z."/>
            <person name="Hunt C."/>
            <person name="Moore K."/>
            <person name="Hurst S.M."/>
            <person name="Lucas M."/>
            <person name="Rochet M."/>
            <person name="Gaillardin C."/>
            <person name="Tallada V.A."/>
            <person name="Garzon A."/>
            <person name="Thode G."/>
            <person name="Daga R.R."/>
            <person name="Cruzado L."/>
            <person name="Jimenez J."/>
            <person name="Sanchez M."/>
            <person name="del Rey F."/>
            <person name="Benito J."/>
            <person name="Dominguez A."/>
            <person name="Revuelta J.L."/>
            <person name="Moreno S."/>
            <person name="Armstrong J."/>
            <person name="Forsburg S.L."/>
            <person name="Cerutti L."/>
            <person name="Lowe T."/>
            <person name="McCombie W.R."/>
            <person name="Paulsen I."/>
            <person name="Potashkin J."/>
            <person name="Shpakovski G.V."/>
            <person name="Ussery D."/>
            <person name="Barrell B.G."/>
            <person name="Nurse P."/>
        </authorList>
    </citation>
    <scope>NUCLEOTIDE SEQUENCE [LARGE SCALE GENOMIC DNA]</scope>
    <source>
        <strain>972 / ATCC 24843</strain>
    </source>
</reference>
<reference key="2">
    <citation type="journal article" date="2006" name="Nat. Biotechnol.">
        <title>ORFeome cloning and global analysis of protein localization in the fission yeast Schizosaccharomyces pombe.</title>
        <authorList>
            <person name="Matsuyama A."/>
            <person name="Arai R."/>
            <person name="Yashiroda Y."/>
            <person name="Shirai A."/>
            <person name="Kamata A."/>
            <person name="Sekido S."/>
            <person name="Kobayashi Y."/>
            <person name="Hashimoto A."/>
            <person name="Hamamoto M."/>
            <person name="Hiraoka Y."/>
            <person name="Horinouchi S."/>
            <person name="Yoshida M."/>
        </authorList>
    </citation>
    <scope>SUBCELLULAR LOCATION [LARGE SCALE ANALYSIS]</scope>
</reference>
<reference key="3">
    <citation type="journal article" date="2014" name="Proc. Natl. Acad. Sci. U.S.A.">
        <title>Hydroxylation of the eukaryotic ribosomal decoding center affects translational accuracy.</title>
        <authorList>
            <person name="Loenarz C."/>
            <person name="Sekirnik R."/>
            <person name="Thalhammer A."/>
            <person name="Ge W."/>
            <person name="Spivakovsky E."/>
            <person name="Mackeen M.M."/>
            <person name="McDonough M.A."/>
            <person name="Cockman M.E."/>
            <person name="Kessler B.M."/>
            <person name="Ratcliffe P.J."/>
            <person name="Wolf A."/>
            <person name="Schofield C.J."/>
        </authorList>
    </citation>
    <scope>HYDROXYLATION AT PRO-62</scope>
</reference>
<dbReference type="EMBL" id="CU329671">
    <property type="protein sequence ID" value="CAB83171.1"/>
    <property type="molecule type" value="Genomic_DNA"/>
</dbReference>
<dbReference type="PIR" id="T38240">
    <property type="entry name" value="T38240"/>
</dbReference>
<dbReference type="RefSeq" id="NP_596187.1">
    <property type="nucleotide sequence ID" value="NM_001022106.2"/>
</dbReference>
<dbReference type="SMR" id="P0CT76"/>
<dbReference type="FunCoup" id="P0CT76">
    <property type="interactions" value="498"/>
</dbReference>
<dbReference type="STRING" id="284812.P0CT76"/>
<dbReference type="iPTMnet" id="P0CT76"/>
<dbReference type="EnsemblFungi" id="SPAC23C11.02c.1">
    <property type="protein sequence ID" value="SPAC23C11.02c.1:pep"/>
    <property type="gene ID" value="SPAC23C11.02c"/>
</dbReference>
<dbReference type="EnsemblFungi" id="SPBP4H10.13.1">
    <property type="protein sequence ID" value="SPBP4H10.13.1:pep"/>
    <property type="gene ID" value="SPBP4H10.13"/>
</dbReference>
<dbReference type="GeneID" id="2541369"/>
<dbReference type="KEGG" id="spo:2541369"/>
<dbReference type="KEGG" id="spo:2542012"/>
<dbReference type="PomBase" id="SPBP4H10.13">
    <property type="gene designation" value="rps2302"/>
</dbReference>
<dbReference type="VEuPathDB" id="FungiDB:SPAC23C11.02c"/>
<dbReference type="VEuPathDB" id="FungiDB:SPBP4H10.13"/>
<dbReference type="InParanoid" id="P0CT76"/>
<dbReference type="OMA" id="KFRWSQR"/>
<dbReference type="PhylomeDB" id="P0CT76"/>
<dbReference type="Reactome" id="R-SPO-156827">
    <property type="pathway name" value="L13a-mediated translational silencing of Ceruloplasmin expression"/>
</dbReference>
<dbReference type="Reactome" id="R-SPO-1799339">
    <property type="pathway name" value="SRP-dependent cotranslational protein targeting to membrane"/>
</dbReference>
<dbReference type="Reactome" id="R-SPO-72649">
    <property type="pathway name" value="Translation initiation complex formation"/>
</dbReference>
<dbReference type="Reactome" id="R-SPO-72689">
    <property type="pathway name" value="Formation of a pool of free 40S subunits"/>
</dbReference>
<dbReference type="Reactome" id="R-SPO-72695">
    <property type="pathway name" value="Formation of the ternary complex, and subsequently, the 43S complex"/>
</dbReference>
<dbReference type="Reactome" id="R-SPO-72702">
    <property type="pathway name" value="Ribosomal scanning and start codon recognition"/>
</dbReference>
<dbReference type="Reactome" id="R-SPO-72706">
    <property type="pathway name" value="GTP hydrolysis and joining of the 60S ribosomal subunit"/>
</dbReference>
<dbReference type="Reactome" id="R-SPO-9629569">
    <property type="pathway name" value="Protein hydroxylation"/>
</dbReference>
<dbReference type="Reactome" id="R-SPO-975956">
    <property type="pathway name" value="Nonsense Mediated Decay (NMD) independent of the Exon Junction Complex (EJC)"/>
</dbReference>
<dbReference type="Reactome" id="R-SPO-975957">
    <property type="pathway name" value="Nonsense Mediated Decay (NMD) enhanced by the Exon Junction Complex (EJC)"/>
</dbReference>
<dbReference type="PRO" id="PR:P0CT76"/>
<dbReference type="Proteomes" id="UP000002485">
    <property type="component" value="Chromosome II"/>
</dbReference>
<dbReference type="GO" id="GO:0022627">
    <property type="term" value="C:cytosolic small ribosomal subunit"/>
    <property type="evidence" value="ECO:0000318"/>
    <property type="project" value="GO_Central"/>
</dbReference>
<dbReference type="GO" id="GO:0005730">
    <property type="term" value="C:nucleolus"/>
    <property type="evidence" value="ECO:0007005"/>
    <property type="project" value="PomBase"/>
</dbReference>
<dbReference type="GO" id="GO:0005634">
    <property type="term" value="C:nucleus"/>
    <property type="evidence" value="ECO:0000314"/>
    <property type="project" value="PomBase"/>
</dbReference>
<dbReference type="GO" id="GO:0005840">
    <property type="term" value="C:ribosome"/>
    <property type="evidence" value="ECO:0000318"/>
    <property type="project" value="GO_Central"/>
</dbReference>
<dbReference type="GO" id="GO:0003735">
    <property type="term" value="F:structural constituent of ribosome"/>
    <property type="evidence" value="ECO:0000318"/>
    <property type="project" value="GO_Central"/>
</dbReference>
<dbReference type="GO" id="GO:0002181">
    <property type="term" value="P:cytoplasmic translation"/>
    <property type="evidence" value="ECO:0000266"/>
    <property type="project" value="PomBase"/>
</dbReference>
<dbReference type="GO" id="GO:0006412">
    <property type="term" value="P:translation"/>
    <property type="evidence" value="ECO:0000318"/>
    <property type="project" value="GO_Central"/>
</dbReference>
<dbReference type="CDD" id="cd03367">
    <property type="entry name" value="Ribosomal_S23"/>
    <property type="match status" value="1"/>
</dbReference>
<dbReference type="FunFam" id="2.40.50.140:FF:000007">
    <property type="entry name" value="40S ribosomal protein S23"/>
    <property type="match status" value="1"/>
</dbReference>
<dbReference type="Gene3D" id="2.40.50.140">
    <property type="entry name" value="Nucleic acid-binding proteins"/>
    <property type="match status" value="1"/>
</dbReference>
<dbReference type="InterPro" id="IPR012340">
    <property type="entry name" value="NA-bd_OB-fold"/>
</dbReference>
<dbReference type="InterPro" id="IPR006032">
    <property type="entry name" value="Ribosomal_uS12"/>
</dbReference>
<dbReference type="InterPro" id="IPR005680">
    <property type="entry name" value="Ribosomal_uS12_euk/arc"/>
</dbReference>
<dbReference type="NCBIfam" id="NF003254">
    <property type="entry name" value="PRK04211.1"/>
    <property type="match status" value="1"/>
</dbReference>
<dbReference type="NCBIfam" id="TIGR00982">
    <property type="entry name" value="uS12_E_A"/>
    <property type="match status" value="1"/>
</dbReference>
<dbReference type="PANTHER" id="PTHR11652">
    <property type="entry name" value="30S RIBOSOMAL PROTEIN S12 FAMILY MEMBER"/>
    <property type="match status" value="1"/>
</dbReference>
<dbReference type="Pfam" id="PF00164">
    <property type="entry name" value="Ribosom_S12_S23"/>
    <property type="match status" value="1"/>
</dbReference>
<dbReference type="PIRSF" id="PIRSF002133">
    <property type="entry name" value="Ribosomal_S12/S23"/>
    <property type="match status" value="1"/>
</dbReference>
<dbReference type="SUPFAM" id="SSF50249">
    <property type="entry name" value="Nucleic acid-binding proteins"/>
    <property type="match status" value="1"/>
</dbReference>
<dbReference type="PROSITE" id="PS00055">
    <property type="entry name" value="RIBOSOMAL_S12"/>
    <property type="match status" value="1"/>
</dbReference>
<keyword id="KW-0963">Cytoplasm</keyword>
<keyword id="KW-0379">Hydroxylation</keyword>
<keyword id="KW-0539">Nucleus</keyword>
<keyword id="KW-1185">Reference proteome</keyword>
<keyword id="KW-0687">Ribonucleoprotein</keyword>
<keyword id="KW-0689">Ribosomal protein</keyword>
<organism>
    <name type="scientific">Schizosaccharomyces pombe (strain 972 / ATCC 24843)</name>
    <name type="common">Fission yeast</name>
    <dbReference type="NCBI Taxonomy" id="284812"/>
    <lineage>
        <taxon>Eukaryota</taxon>
        <taxon>Fungi</taxon>
        <taxon>Dikarya</taxon>
        <taxon>Ascomycota</taxon>
        <taxon>Taphrinomycotina</taxon>
        <taxon>Schizosaccharomycetes</taxon>
        <taxon>Schizosaccharomycetales</taxon>
        <taxon>Schizosaccharomycetaceae</taxon>
        <taxon>Schizosaccharomyces</taxon>
    </lineage>
</organism>
<evidence type="ECO:0000250" key="1">
    <source>
        <dbReference type="UniProtKB" id="P0CX30"/>
    </source>
</evidence>
<evidence type="ECO:0000269" key="2">
    <source>
    </source>
</evidence>
<evidence type="ECO:0000269" key="3">
    <source>
    </source>
</evidence>
<evidence type="ECO:0000305" key="4"/>
<evidence type="ECO:0000305" key="5">
    <source>
    </source>
</evidence>